<comment type="function">
    <text evidence="1">Catalyzes the formation of 2'O-methylated cytidine (Cm32) or 2'O-methylated uridine (Um32) at position 32 in tRNA.</text>
</comment>
<comment type="catalytic activity">
    <reaction evidence="1">
        <text>cytidine(32) in tRNA + S-adenosyl-L-methionine = 2'-O-methylcytidine(32) in tRNA + S-adenosyl-L-homocysteine + H(+)</text>
        <dbReference type="Rhea" id="RHEA:42932"/>
        <dbReference type="Rhea" id="RHEA-COMP:10288"/>
        <dbReference type="Rhea" id="RHEA-COMP:10289"/>
        <dbReference type="ChEBI" id="CHEBI:15378"/>
        <dbReference type="ChEBI" id="CHEBI:57856"/>
        <dbReference type="ChEBI" id="CHEBI:59789"/>
        <dbReference type="ChEBI" id="CHEBI:74495"/>
        <dbReference type="ChEBI" id="CHEBI:82748"/>
        <dbReference type="EC" id="2.1.1.200"/>
    </reaction>
</comment>
<comment type="catalytic activity">
    <reaction evidence="1">
        <text>uridine(32) in tRNA + S-adenosyl-L-methionine = 2'-O-methyluridine(32) in tRNA + S-adenosyl-L-homocysteine + H(+)</text>
        <dbReference type="Rhea" id="RHEA:42936"/>
        <dbReference type="Rhea" id="RHEA-COMP:10107"/>
        <dbReference type="Rhea" id="RHEA-COMP:10290"/>
        <dbReference type="ChEBI" id="CHEBI:15378"/>
        <dbReference type="ChEBI" id="CHEBI:57856"/>
        <dbReference type="ChEBI" id="CHEBI:59789"/>
        <dbReference type="ChEBI" id="CHEBI:65315"/>
        <dbReference type="ChEBI" id="CHEBI:74478"/>
        <dbReference type="EC" id="2.1.1.200"/>
    </reaction>
</comment>
<comment type="subunit">
    <text evidence="1">Homodimer.</text>
</comment>
<comment type="subcellular location">
    <subcellularLocation>
        <location evidence="1">Cytoplasm</location>
    </subcellularLocation>
</comment>
<comment type="similarity">
    <text evidence="3">Belongs to the class IV-like SAM-binding methyltransferase superfamily. RNA methyltransferase TrmH family.</text>
</comment>
<name>TRMJ_YERPA</name>
<proteinExistence type="inferred from homology"/>
<organism>
    <name type="scientific">Yersinia pestis bv. Antiqua (strain Antiqua)</name>
    <dbReference type="NCBI Taxonomy" id="360102"/>
    <lineage>
        <taxon>Bacteria</taxon>
        <taxon>Pseudomonadati</taxon>
        <taxon>Pseudomonadota</taxon>
        <taxon>Gammaproteobacteria</taxon>
        <taxon>Enterobacterales</taxon>
        <taxon>Yersiniaceae</taxon>
        <taxon>Yersinia</taxon>
    </lineage>
</organism>
<gene>
    <name type="primary">trmJ</name>
    <name type="ordered locus">YPA_2339</name>
</gene>
<protein>
    <recommendedName>
        <fullName evidence="1">tRNA (cytidine/uridine-2'-O-)-methyltransferase TrmJ</fullName>
        <ecNumber evidence="1">2.1.1.200</ecNumber>
    </recommendedName>
    <alternativeName>
        <fullName evidence="1">tRNA (cytidine(32)/uridine(32)-2'-O)-methyltransferase</fullName>
    </alternativeName>
    <alternativeName>
        <fullName evidence="1">tRNA Cm32/Um32 methyltransferase</fullName>
    </alternativeName>
</protein>
<feature type="chain" id="PRO_0000313868" description="tRNA (cytidine/uridine-2'-O-)-methyltransferase TrmJ">
    <location>
        <begin position="1"/>
        <end position="257"/>
    </location>
</feature>
<feature type="region of interest" description="Disordered" evidence="2">
    <location>
        <begin position="238"/>
        <end position="257"/>
    </location>
</feature>
<feature type="binding site" evidence="1">
    <location>
        <begin position="79"/>
        <end position="81"/>
    </location>
    <ligand>
        <name>S-adenosyl-L-methionine</name>
        <dbReference type="ChEBI" id="CHEBI:59789"/>
    </ligand>
</feature>
<feature type="binding site" evidence="1">
    <location>
        <position position="114"/>
    </location>
    <ligand>
        <name>S-adenosyl-L-methionine</name>
        <dbReference type="ChEBI" id="CHEBI:59789"/>
    </ligand>
</feature>
<feature type="binding site" evidence="1">
    <location>
        <position position="134"/>
    </location>
    <ligand>
        <name>S-adenosyl-L-methionine</name>
        <dbReference type="ChEBI" id="CHEBI:59789"/>
    </ligand>
</feature>
<feature type="binding site" evidence="1">
    <location>
        <begin position="141"/>
        <end position="143"/>
    </location>
    <ligand>
        <name>S-adenosyl-L-methionine</name>
        <dbReference type="ChEBI" id="CHEBI:59789"/>
    </ligand>
</feature>
<keyword id="KW-0963">Cytoplasm</keyword>
<keyword id="KW-0489">Methyltransferase</keyword>
<keyword id="KW-0949">S-adenosyl-L-methionine</keyword>
<keyword id="KW-0808">Transferase</keyword>
<keyword id="KW-0819">tRNA processing</keyword>
<reference key="1">
    <citation type="journal article" date="2006" name="J. Bacteriol.">
        <title>Complete genome sequence of Yersinia pestis strains Antiqua and Nepal516: evidence of gene reduction in an emerging pathogen.</title>
        <authorList>
            <person name="Chain P.S.G."/>
            <person name="Hu P."/>
            <person name="Malfatti S.A."/>
            <person name="Radnedge L."/>
            <person name="Larimer F."/>
            <person name="Vergez L.M."/>
            <person name="Worsham P."/>
            <person name="Chu M.C."/>
            <person name="Andersen G.L."/>
        </authorList>
    </citation>
    <scope>NUCLEOTIDE SEQUENCE [LARGE SCALE GENOMIC DNA]</scope>
    <source>
        <strain>Antiqua</strain>
    </source>
</reference>
<dbReference type="EC" id="2.1.1.200" evidence="1"/>
<dbReference type="EMBL" id="CP000308">
    <property type="protein sequence ID" value="ABG14304.1"/>
    <property type="molecule type" value="Genomic_DNA"/>
</dbReference>
<dbReference type="RefSeq" id="WP_002217034.1">
    <property type="nucleotide sequence ID" value="NZ_CP009906.1"/>
</dbReference>
<dbReference type="SMR" id="Q1C5G8"/>
<dbReference type="GeneID" id="57975855"/>
<dbReference type="KEGG" id="ypa:YPA_2339"/>
<dbReference type="Proteomes" id="UP000001971">
    <property type="component" value="Chromosome"/>
</dbReference>
<dbReference type="GO" id="GO:0005829">
    <property type="term" value="C:cytosol"/>
    <property type="evidence" value="ECO:0007669"/>
    <property type="project" value="TreeGrafter"/>
</dbReference>
<dbReference type="GO" id="GO:0003723">
    <property type="term" value="F:RNA binding"/>
    <property type="evidence" value="ECO:0007669"/>
    <property type="project" value="InterPro"/>
</dbReference>
<dbReference type="GO" id="GO:0160206">
    <property type="term" value="F:tRNA (cytidine(32)/uridine(32)-2'-O)-methyltransferase activity"/>
    <property type="evidence" value="ECO:0007669"/>
    <property type="project" value="UniProtKB-EC"/>
</dbReference>
<dbReference type="GO" id="GO:0002128">
    <property type="term" value="P:tRNA nucleoside ribose methylation"/>
    <property type="evidence" value="ECO:0007669"/>
    <property type="project" value="TreeGrafter"/>
</dbReference>
<dbReference type="CDD" id="cd18093">
    <property type="entry name" value="SpoU-like_TrmJ"/>
    <property type="match status" value="1"/>
</dbReference>
<dbReference type="FunFam" id="1.10.8.590:FF:000001">
    <property type="entry name" value="tRNA:Cm32/Um32 methyltransferase"/>
    <property type="match status" value="1"/>
</dbReference>
<dbReference type="FunFam" id="3.40.1280.10:FF:000006">
    <property type="entry name" value="Uncharacterized tRNA/rRNA methyltransferase HI_0380"/>
    <property type="match status" value="1"/>
</dbReference>
<dbReference type="Gene3D" id="1.10.8.590">
    <property type="match status" value="1"/>
</dbReference>
<dbReference type="Gene3D" id="3.40.1280.10">
    <property type="match status" value="1"/>
</dbReference>
<dbReference type="InterPro" id="IPR029028">
    <property type="entry name" value="Alpha/beta_knot_MTases"/>
</dbReference>
<dbReference type="InterPro" id="IPR004384">
    <property type="entry name" value="RNA_MeTrfase_TrmJ/LasT"/>
</dbReference>
<dbReference type="InterPro" id="IPR001537">
    <property type="entry name" value="SpoU_MeTrfase"/>
</dbReference>
<dbReference type="InterPro" id="IPR029026">
    <property type="entry name" value="tRNA_m1G_MTases_N"/>
</dbReference>
<dbReference type="NCBIfam" id="NF011694">
    <property type="entry name" value="PRK15114.1"/>
    <property type="match status" value="1"/>
</dbReference>
<dbReference type="NCBIfam" id="TIGR00050">
    <property type="entry name" value="rRNA_methyl_1"/>
    <property type="match status" value="1"/>
</dbReference>
<dbReference type="PANTHER" id="PTHR42786:SF2">
    <property type="entry name" value="TRNA (CYTIDINE_URIDINE-2'-O-)-METHYLTRANSFERASE TRMJ"/>
    <property type="match status" value="1"/>
</dbReference>
<dbReference type="PANTHER" id="PTHR42786">
    <property type="entry name" value="TRNA/RRNA METHYLTRANSFERASE"/>
    <property type="match status" value="1"/>
</dbReference>
<dbReference type="Pfam" id="PF00588">
    <property type="entry name" value="SpoU_methylase"/>
    <property type="match status" value="1"/>
</dbReference>
<dbReference type="PIRSF" id="PIRSF004808">
    <property type="entry name" value="LasT"/>
    <property type="match status" value="1"/>
</dbReference>
<dbReference type="SUPFAM" id="SSF75217">
    <property type="entry name" value="alpha/beta knot"/>
    <property type="match status" value="1"/>
</dbReference>
<accession>Q1C5G8</accession>
<evidence type="ECO:0000250" key="1">
    <source>
        <dbReference type="UniProtKB" id="P0AE01"/>
    </source>
</evidence>
<evidence type="ECO:0000256" key="2">
    <source>
        <dbReference type="SAM" id="MobiDB-lite"/>
    </source>
</evidence>
<evidence type="ECO:0000305" key="3"/>
<sequence>MLHNIRIVLVETSHTGNMGSTARAMKTMGLTNLYLVNPLVKPDSQAIALSAGASDVIGKATIVDTLDEALAGCSLVVGTSARSRTLPWPMLEPRECGVRSAREAEHAPVALVFGRERVGLTNDELQKCHYHVAIPANPEYSSLNLAMAVQILAYEVRVAYLDRQQANAPVEEEEEAPYPLVDDLERFYQHLEQVLSHSGFIRQAHPGQIMSKLRRLFTRARPEAQELNILRGMLTSIEKQDKYPQRGTGDTAGKSKD</sequence>